<reference key="1">
    <citation type="submission" date="2008-02" db="EMBL/GenBank/DDBJ databases">
        <title>Complete sequence of Pseudomonas putida W619.</title>
        <authorList>
            <person name="Copeland A."/>
            <person name="Lucas S."/>
            <person name="Lapidus A."/>
            <person name="Barry K."/>
            <person name="Detter J.C."/>
            <person name="Glavina del Rio T."/>
            <person name="Dalin E."/>
            <person name="Tice H."/>
            <person name="Pitluck S."/>
            <person name="Chain P."/>
            <person name="Malfatti S."/>
            <person name="Shin M."/>
            <person name="Vergez L."/>
            <person name="Schmutz J."/>
            <person name="Larimer F."/>
            <person name="Land M."/>
            <person name="Hauser L."/>
            <person name="Kyrpides N."/>
            <person name="Kim E."/>
            <person name="Taghavi S."/>
            <person name="Vangronsveld D."/>
            <person name="van der Lelie D."/>
            <person name="Richardson P."/>
        </authorList>
    </citation>
    <scope>NUCLEOTIDE SEQUENCE [LARGE SCALE GENOMIC DNA]</scope>
    <source>
        <strain>W619</strain>
    </source>
</reference>
<organism>
    <name type="scientific">Pseudomonas putida (strain W619)</name>
    <dbReference type="NCBI Taxonomy" id="390235"/>
    <lineage>
        <taxon>Bacteria</taxon>
        <taxon>Pseudomonadati</taxon>
        <taxon>Pseudomonadota</taxon>
        <taxon>Gammaproteobacteria</taxon>
        <taxon>Pseudomonadales</taxon>
        <taxon>Pseudomonadaceae</taxon>
        <taxon>Pseudomonas</taxon>
    </lineage>
</organism>
<sequence length="230" mass="25756">MTDDDRIKLEPGWKNALRAEFDQPYMHQLREFLRQEYAAGKEIYPPGPMIFNALNSTPLEQVKVVILGQDPYHGPGQAHGLCFSVQPGVPTPPSLVNIYKELHRDLNIPIASHGYLQSWAEQGVLLLNTTMTVERANAASHAKKGWEFFTDRIIQVVSEQCPNVVFLLWGAHAQSKQKLIDGTKHLVLKSVHPSPLSAYRGFLGCGHFSRTNGFLEQRGLAPINWALPPL</sequence>
<accession>B1J4J3</accession>
<comment type="function">
    <text evidence="1">Excises uracil residues from the DNA which can arise as a result of misincorporation of dUMP residues by DNA polymerase or due to deamination of cytosine.</text>
</comment>
<comment type="catalytic activity">
    <reaction evidence="1">
        <text>Hydrolyzes single-stranded DNA or mismatched double-stranded DNA and polynucleotides, releasing free uracil.</text>
        <dbReference type="EC" id="3.2.2.27"/>
    </reaction>
</comment>
<comment type="subcellular location">
    <subcellularLocation>
        <location evidence="1">Cytoplasm</location>
    </subcellularLocation>
</comment>
<comment type="similarity">
    <text evidence="1">Belongs to the uracil-DNA glycosylase (UDG) superfamily. UNG family.</text>
</comment>
<dbReference type="EC" id="3.2.2.27" evidence="1"/>
<dbReference type="EMBL" id="CP000949">
    <property type="protein sequence ID" value="ACA71559.1"/>
    <property type="molecule type" value="Genomic_DNA"/>
</dbReference>
<dbReference type="SMR" id="B1J4J3"/>
<dbReference type="STRING" id="390235.PputW619_1054"/>
<dbReference type="KEGG" id="ppw:PputW619_1054"/>
<dbReference type="eggNOG" id="COG0692">
    <property type="taxonomic scope" value="Bacteria"/>
</dbReference>
<dbReference type="HOGENOM" id="CLU_032162_3_1_6"/>
<dbReference type="OrthoDB" id="9804372at2"/>
<dbReference type="GO" id="GO:0005737">
    <property type="term" value="C:cytoplasm"/>
    <property type="evidence" value="ECO:0007669"/>
    <property type="project" value="UniProtKB-SubCell"/>
</dbReference>
<dbReference type="GO" id="GO:0004844">
    <property type="term" value="F:uracil DNA N-glycosylase activity"/>
    <property type="evidence" value="ECO:0007669"/>
    <property type="project" value="UniProtKB-UniRule"/>
</dbReference>
<dbReference type="GO" id="GO:0097510">
    <property type="term" value="P:base-excision repair, AP site formation via deaminated base removal"/>
    <property type="evidence" value="ECO:0007669"/>
    <property type="project" value="TreeGrafter"/>
</dbReference>
<dbReference type="CDD" id="cd10027">
    <property type="entry name" value="UDG-F1-like"/>
    <property type="match status" value="1"/>
</dbReference>
<dbReference type="FunFam" id="3.40.470.10:FF:000001">
    <property type="entry name" value="Uracil-DNA glycosylase"/>
    <property type="match status" value="1"/>
</dbReference>
<dbReference type="Gene3D" id="3.40.470.10">
    <property type="entry name" value="Uracil-DNA glycosylase-like domain"/>
    <property type="match status" value="1"/>
</dbReference>
<dbReference type="HAMAP" id="MF_00148">
    <property type="entry name" value="UDG"/>
    <property type="match status" value="1"/>
</dbReference>
<dbReference type="InterPro" id="IPR002043">
    <property type="entry name" value="UDG_fam1"/>
</dbReference>
<dbReference type="InterPro" id="IPR018085">
    <property type="entry name" value="Ura-DNA_Glyclase_AS"/>
</dbReference>
<dbReference type="InterPro" id="IPR005122">
    <property type="entry name" value="Uracil-DNA_glycosylase-like"/>
</dbReference>
<dbReference type="InterPro" id="IPR036895">
    <property type="entry name" value="Uracil-DNA_glycosylase-like_sf"/>
</dbReference>
<dbReference type="NCBIfam" id="NF003588">
    <property type="entry name" value="PRK05254.1-1"/>
    <property type="match status" value="1"/>
</dbReference>
<dbReference type="NCBIfam" id="NF003589">
    <property type="entry name" value="PRK05254.1-2"/>
    <property type="match status" value="1"/>
</dbReference>
<dbReference type="NCBIfam" id="NF003591">
    <property type="entry name" value="PRK05254.1-4"/>
    <property type="match status" value="1"/>
</dbReference>
<dbReference type="NCBIfam" id="NF003592">
    <property type="entry name" value="PRK05254.1-5"/>
    <property type="match status" value="1"/>
</dbReference>
<dbReference type="NCBIfam" id="TIGR00628">
    <property type="entry name" value="ung"/>
    <property type="match status" value="1"/>
</dbReference>
<dbReference type="PANTHER" id="PTHR11264">
    <property type="entry name" value="URACIL-DNA GLYCOSYLASE"/>
    <property type="match status" value="1"/>
</dbReference>
<dbReference type="PANTHER" id="PTHR11264:SF0">
    <property type="entry name" value="URACIL-DNA GLYCOSYLASE"/>
    <property type="match status" value="1"/>
</dbReference>
<dbReference type="Pfam" id="PF03167">
    <property type="entry name" value="UDG"/>
    <property type="match status" value="1"/>
</dbReference>
<dbReference type="SMART" id="SM00986">
    <property type="entry name" value="UDG"/>
    <property type="match status" value="1"/>
</dbReference>
<dbReference type="SMART" id="SM00987">
    <property type="entry name" value="UreE_C"/>
    <property type="match status" value="1"/>
</dbReference>
<dbReference type="SUPFAM" id="SSF52141">
    <property type="entry name" value="Uracil-DNA glycosylase-like"/>
    <property type="match status" value="1"/>
</dbReference>
<dbReference type="PROSITE" id="PS00130">
    <property type="entry name" value="U_DNA_GLYCOSYLASE"/>
    <property type="match status" value="1"/>
</dbReference>
<gene>
    <name evidence="1" type="primary">ung</name>
    <name type="ordered locus">PputW619_1054</name>
</gene>
<feature type="chain" id="PRO_1000096599" description="Uracil-DNA glycosylase">
    <location>
        <begin position="1"/>
        <end position="230"/>
    </location>
</feature>
<feature type="active site" description="Proton acceptor" evidence="1">
    <location>
        <position position="70"/>
    </location>
</feature>
<keyword id="KW-0963">Cytoplasm</keyword>
<keyword id="KW-0227">DNA damage</keyword>
<keyword id="KW-0234">DNA repair</keyword>
<keyword id="KW-0378">Hydrolase</keyword>
<name>UNG_PSEPW</name>
<protein>
    <recommendedName>
        <fullName evidence="1">Uracil-DNA glycosylase</fullName>
        <shortName evidence="1">UDG</shortName>
        <ecNumber evidence="1">3.2.2.27</ecNumber>
    </recommendedName>
</protein>
<evidence type="ECO:0000255" key="1">
    <source>
        <dbReference type="HAMAP-Rule" id="MF_00148"/>
    </source>
</evidence>
<proteinExistence type="inferred from homology"/>